<sequence length="244" mass="27042">MKVKTSLSTLILILFLTGCKVDLYTGISQKEGNEMLALLRQEGLSADKEPDKDGKIKLLVEESDVAQAIDILKRKGYPHESFSTLQDVFPKDGLISSPIEELARLNYAKAQEISRTLSEIDGVLVARVHVVLPEEQNNKGKKGVAASASVFIKHAADIQFDTYIPQIKQLVNNSIEGLAYDRISVILVPSVDVRQSSHLPRNTSILSIQVSEESKGHLIGLLSLLILLLPVTNLAQYFWLQRKK</sequence>
<evidence type="ECO:0000250" key="1"/>
<evidence type="ECO:0000255" key="2"/>
<evidence type="ECO:0000255" key="3">
    <source>
        <dbReference type="PROSITE-ProRule" id="PRU00303"/>
    </source>
</evidence>
<evidence type="ECO:0000305" key="4"/>
<geneLocation type="plasmid">
    <name>pCD1</name>
</geneLocation>
<proteinExistence type="evidence at protein level"/>
<name>YSCJ_YERPE</name>
<organism>
    <name type="scientific">Yersinia pestis</name>
    <dbReference type="NCBI Taxonomy" id="632"/>
    <lineage>
        <taxon>Bacteria</taxon>
        <taxon>Pseudomonadati</taxon>
        <taxon>Pseudomonadota</taxon>
        <taxon>Gammaproteobacteria</taxon>
        <taxon>Enterobacterales</taxon>
        <taxon>Yersiniaceae</taxon>
        <taxon>Yersinia</taxon>
    </lineage>
</organism>
<comment type="function">
    <text evidence="1">Required for the export process of the Yop proteins.</text>
</comment>
<comment type="interaction">
    <interactant intactId="EBI-2860400">
        <id>P69972</id>
    </interactant>
    <interactant intactId="EBI-6413916">
        <id>Q56975</id>
        <label>yscD</label>
    </interactant>
    <organismsDiffer>false</organismsDiffer>
    <experiments>2</experiments>
</comment>
<comment type="subcellular location">
    <subcellularLocation>
        <location evidence="1">Cell outer membrane</location>
        <topology evidence="3">Lipid-anchor</topology>
    </subcellularLocation>
</comment>
<comment type="similarity">
    <text evidence="4">Belongs to the YscJ lipoprotein family.</text>
</comment>
<keyword id="KW-0998">Cell outer membrane</keyword>
<keyword id="KW-0449">Lipoprotein</keyword>
<keyword id="KW-0472">Membrane</keyword>
<keyword id="KW-0564">Palmitate</keyword>
<keyword id="KW-0614">Plasmid</keyword>
<keyword id="KW-0653">Protein transport</keyword>
<keyword id="KW-1185">Reference proteome</keyword>
<keyword id="KW-0732">Signal</keyword>
<keyword id="KW-0812">Transmembrane</keyword>
<keyword id="KW-1133">Transmembrane helix</keyword>
<keyword id="KW-0813">Transport</keyword>
<keyword id="KW-0843">Virulence</keyword>
<dbReference type="EMBL" id="AF074612">
    <property type="protein sequence ID" value="AAC69775.1"/>
    <property type="molecule type" value="Genomic_DNA"/>
</dbReference>
<dbReference type="EMBL" id="AF053946">
    <property type="protein sequence ID" value="AAC62607.1"/>
    <property type="molecule type" value="Genomic_DNA"/>
</dbReference>
<dbReference type="EMBL" id="AL117189">
    <property type="protein sequence ID" value="CAB54936.1"/>
    <property type="molecule type" value="Genomic_DNA"/>
</dbReference>
<dbReference type="EMBL" id="AE017043">
    <property type="protein sequence ID" value="AAS58543.1"/>
    <property type="molecule type" value="Genomic_DNA"/>
</dbReference>
<dbReference type="PIR" id="T43566">
    <property type="entry name" value="T43566"/>
</dbReference>
<dbReference type="RefSeq" id="NP_395193.1">
    <property type="nucleotide sequence ID" value="NC_003131.1"/>
</dbReference>
<dbReference type="RefSeq" id="NP_857723.1">
    <property type="nucleotide sequence ID" value="NC_004836.1"/>
</dbReference>
<dbReference type="RefSeq" id="NP_857918.1">
    <property type="nucleotide sequence ID" value="NC_004839.1"/>
</dbReference>
<dbReference type="RefSeq" id="WP_002212912.1">
    <property type="nucleotide sequence ID" value="NZ_WUCM01000070.1"/>
</dbReference>
<dbReference type="SMR" id="P69972"/>
<dbReference type="IntAct" id="P69972">
    <property type="interactions" value="2"/>
</dbReference>
<dbReference type="PaxDb" id="214092-5832479"/>
<dbReference type="DNASU" id="1149282"/>
<dbReference type="EnsemblBacteria" id="AAS58543">
    <property type="protein sequence ID" value="AAS58543"/>
    <property type="gene ID" value="YP_pCD24"/>
</dbReference>
<dbReference type="KEGG" id="ype:YPCD1.59"/>
<dbReference type="KEGG" id="ypm:YP_pCD24"/>
<dbReference type="PATRIC" id="fig|214092.21.peg.69"/>
<dbReference type="eggNOG" id="COG4669">
    <property type="taxonomic scope" value="Bacteria"/>
</dbReference>
<dbReference type="HOGENOM" id="CLU_073268_0_2_6"/>
<dbReference type="OMA" id="SVFIRHD"/>
<dbReference type="OrthoDB" id="115186at2"/>
<dbReference type="Proteomes" id="UP000000815">
    <property type="component" value="Plasmid pCD1"/>
</dbReference>
<dbReference type="Proteomes" id="UP000001019">
    <property type="component" value="Plasmid pCD1"/>
</dbReference>
<dbReference type="GO" id="GO:0009279">
    <property type="term" value="C:cell outer membrane"/>
    <property type="evidence" value="ECO:0007669"/>
    <property type="project" value="UniProtKB-SubCell"/>
</dbReference>
<dbReference type="GO" id="GO:0009306">
    <property type="term" value="P:protein secretion"/>
    <property type="evidence" value="ECO:0007669"/>
    <property type="project" value="InterPro"/>
</dbReference>
<dbReference type="Gene3D" id="3.30.300.30">
    <property type="match status" value="1"/>
</dbReference>
<dbReference type="Gene3D" id="3.30.70.1530">
    <property type="entry name" value="Hypothetical protein rpa1041"/>
    <property type="match status" value="1"/>
</dbReference>
<dbReference type="InterPro" id="IPR045851">
    <property type="entry name" value="AMP-bd_C_sf"/>
</dbReference>
<dbReference type="InterPro" id="IPR006182">
    <property type="entry name" value="FliF_N_dom"/>
</dbReference>
<dbReference type="InterPro" id="IPR003282">
    <property type="entry name" value="T3SS_SctJ"/>
</dbReference>
<dbReference type="InterPro" id="IPR043427">
    <property type="entry name" value="YscJ/FliF"/>
</dbReference>
<dbReference type="NCBIfam" id="TIGR02544">
    <property type="entry name" value="III_secr_YscJ"/>
    <property type="match status" value="1"/>
</dbReference>
<dbReference type="PANTHER" id="PTHR30046">
    <property type="entry name" value="FLAGELLAR M-RING PROTEIN"/>
    <property type="match status" value="1"/>
</dbReference>
<dbReference type="PANTHER" id="PTHR30046:SF2">
    <property type="entry name" value="YOP PROTEINS TRANSLOCATION LIPOPROTEIN J"/>
    <property type="match status" value="1"/>
</dbReference>
<dbReference type="Pfam" id="PF01514">
    <property type="entry name" value="YscJ_FliF"/>
    <property type="match status" value="1"/>
</dbReference>
<dbReference type="PRINTS" id="PR01338">
    <property type="entry name" value="TYPE3OMKPROT"/>
</dbReference>
<dbReference type="PROSITE" id="PS51257">
    <property type="entry name" value="PROKAR_LIPOPROTEIN"/>
    <property type="match status" value="1"/>
</dbReference>
<protein>
    <recommendedName>
        <fullName>Yop proteins translocation lipoprotein J</fullName>
    </recommendedName>
    <alternativeName>
        <fullName>Lipoprotein YlpB</fullName>
    </alternativeName>
    <alternativeName>
        <fullName>Low calcium response locus protein KA</fullName>
    </alternativeName>
</protein>
<reference key="1">
    <citation type="journal article" date="1998" name="Infect. Immun.">
        <title>DNA sequencing and analysis of the low-Ca2+-response plasmid pCD1 of Yersinia pestis KIM5.</title>
        <authorList>
            <person name="Perry R.D."/>
            <person name="Straley S.C."/>
            <person name="Fetherston J.D."/>
            <person name="Rose D.J."/>
            <person name="Gregor J."/>
            <person name="Blattner F.R."/>
        </authorList>
    </citation>
    <scope>NUCLEOTIDE SEQUENCE [GENOMIC DNA]</scope>
    <source>
        <strain>KIM5 / Biovar Mediaevalis</strain>
    </source>
</reference>
<reference key="2">
    <citation type="journal article" date="1998" name="J. Bacteriol.">
        <title>Structural organization of virulence-associated plasmids of Yersinia pestis.</title>
        <authorList>
            <person name="Hu P."/>
            <person name="Elliott J."/>
            <person name="McCready P."/>
            <person name="Skowronski E."/>
            <person name="Garnes J."/>
            <person name="Kobayashi A."/>
            <person name="Brubaker R.R."/>
            <person name="Garcia E."/>
        </authorList>
    </citation>
    <scope>NUCLEOTIDE SEQUENCE [GENOMIC DNA]</scope>
    <source>
        <strain>KIM5 / Biovar Mediaevalis</strain>
    </source>
</reference>
<reference key="3">
    <citation type="journal article" date="2001" name="Nature">
        <title>Genome sequence of Yersinia pestis, the causative agent of plague.</title>
        <authorList>
            <person name="Parkhill J."/>
            <person name="Wren B.W."/>
            <person name="Thomson N.R."/>
            <person name="Titball R.W."/>
            <person name="Holden M.T.G."/>
            <person name="Prentice M.B."/>
            <person name="Sebaihia M."/>
            <person name="James K.D."/>
            <person name="Churcher C.M."/>
            <person name="Mungall K.L."/>
            <person name="Baker S."/>
            <person name="Basham D."/>
            <person name="Bentley S.D."/>
            <person name="Brooks K."/>
            <person name="Cerdeno-Tarraga A.-M."/>
            <person name="Chillingworth T."/>
            <person name="Cronin A."/>
            <person name="Davies R.M."/>
            <person name="Davis P."/>
            <person name="Dougan G."/>
            <person name="Feltwell T."/>
            <person name="Hamlin N."/>
            <person name="Holroyd S."/>
            <person name="Jagels K."/>
            <person name="Karlyshev A.V."/>
            <person name="Leather S."/>
            <person name="Moule S."/>
            <person name="Oyston P.C.F."/>
            <person name="Quail M.A."/>
            <person name="Rutherford K.M."/>
            <person name="Simmonds M."/>
            <person name="Skelton J."/>
            <person name="Stevens K."/>
            <person name="Whitehead S."/>
            <person name="Barrell B.G."/>
        </authorList>
    </citation>
    <scope>NUCLEOTIDE SEQUENCE [LARGE SCALE GENOMIC DNA]</scope>
    <source>
        <strain>CO-92 / Biovar Orientalis</strain>
    </source>
</reference>
<reference key="4">
    <citation type="journal article" date="2004" name="DNA Res.">
        <title>Complete genome sequence of Yersinia pestis strain 91001, an isolate avirulent to humans.</title>
        <authorList>
            <person name="Song Y."/>
            <person name="Tong Z."/>
            <person name="Wang J."/>
            <person name="Wang L."/>
            <person name="Guo Z."/>
            <person name="Han Y."/>
            <person name="Zhang J."/>
            <person name="Pei D."/>
            <person name="Zhou D."/>
            <person name="Qin H."/>
            <person name="Pang X."/>
            <person name="Han Y."/>
            <person name="Zhai J."/>
            <person name="Li M."/>
            <person name="Cui B."/>
            <person name="Qi Z."/>
            <person name="Jin L."/>
            <person name="Dai R."/>
            <person name="Chen F."/>
            <person name="Li S."/>
            <person name="Ye C."/>
            <person name="Du Z."/>
            <person name="Lin W."/>
            <person name="Wang J."/>
            <person name="Yu J."/>
            <person name="Yang H."/>
            <person name="Wang J."/>
            <person name="Huang P."/>
            <person name="Yang R."/>
        </authorList>
    </citation>
    <scope>NUCLEOTIDE SEQUENCE [LARGE SCALE GENOMIC DNA]</scope>
    <source>
        <strain>91001 / Biovar Mediaevalis</strain>
    </source>
</reference>
<gene>
    <name type="primary">yscJ</name>
    <name type="synonym">lcrKA</name>
    <name type="synonym">ylpB</name>
    <name type="ordered locus">YPCD1.59</name>
    <name type="ordered locus">y5019</name>
    <name type="ordered locus">y0022</name>
    <name type="ordered locus">YP_pCD24</name>
</gene>
<accession>P69972</accession>
<accession>Q00926</accession>
<accession>Q663I0</accession>
<feature type="signal peptide" evidence="4">
    <location>
        <begin position="1"/>
        <end position="18"/>
    </location>
</feature>
<feature type="chain" id="PRO_0000018231" description="Yop proteins translocation lipoprotein J">
    <location>
        <begin position="19"/>
        <end position="244"/>
    </location>
</feature>
<feature type="transmembrane region" description="Helical" evidence="2">
    <location>
        <begin position="218"/>
        <end position="238"/>
    </location>
</feature>
<feature type="lipid moiety-binding region" description="N-palmitoyl cysteine" evidence="3">
    <location>
        <position position="19"/>
    </location>
</feature>
<feature type="lipid moiety-binding region" description="S-diacylglycerol cysteine" evidence="3">
    <location>
        <position position="19"/>
    </location>
</feature>